<comment type="function">
    <text evidence="1">Endonuclease that specifically degrades the RNA of RNA-DNA hybrids.</text>
</comment>
<comment type="catalytic activity">
    <reaction evidence="1">
        <text>Endonucleolytic cleavage to 5'-phosphomonoester.</text>
        <dbReference type="EC" id="3.1.26.4"/>
    </reaction>
</comment>
<comment type="cofactor">
    <cofactor evidence="1">
        <name>Mn(2+)</name>
        <dbReference type="ChEBI" id="CHEBI:29035"/>
    </cofactor>
    <cofactor evidence="1">
        <name>Mg(2+)</name>
        <dbReference type="ChEBI" id="CHEBI:18420"/>
    </cofactor>
    <text evidence="1">Manganese or magnesium. Binds 1 divalent metal ion per monomer in the absence of substrate. May bind a second metal ion after substrate binding.</text>
</comment>
<comment type="subcellular location">
    <subcellularLocation>
        <location evidence="1">Cytoplasm</location>
    </subcellularLocation>
</comment>
<comment type="similarity">
    <text evidence="1">Belongs to the RNase HII family. RnhC subfamily.</text>
</comment>
<organism>
    <name type="scientific">Streptococcus pyogenes serotype M12 (strain MGAS9429)</name>
    <dbReference type="NCBI Taxonomy" id="370551"/>
    <lineage>
        <taxon>Bacteria</taxon>
        <taxon>Bacillati</taxon>
        <taxon>Bacillota</taxon>
        <taxon>Bacilli</taxon>
        <taxon>Lactobacillales</taxon>
        <taxon>Streptococcaceae</taxon>
        <taxon>Streptococcus</taxon>
    </lineage>
</organism>
<accession>Q1JK67</accession>
<name>RNH3_STRPC</name>
<feature type="chain" id="PRO_1000031244" description="Ribonuclease HIII">
    <location>
        <begin position="1"/>
        <end position="300"/>
    </location>
</feature>
<feature type="domain" description="RNase H type-2" evidence="2">
    <location>
        <begin position="83"/>
        <end position="300"/>
    </location>
</feature>
<feature type="binding site" evidence="1">
    <location>
        <position position="89"/>
    </location>
    <ligand>
        <name>a divalent metal cation</name>
        <dbReference type="ChEBI" id="CHEBI:60240"/>
    </ligand>
</feature>
<feature type="binding site" evidence="1">
    <location>
        <position position="90"/>
    </location>
    <ligand>
        <name>a divalent metal cation</name>
        <dbReference type="ChEBI" id="CHEBI:60240"/>
    </ligand>
</feature>
<feature type="binding site" evidence="1">
    <location>
        <position position="194"/>
    </location>
    <ligand>
        <name>a divalent metal cation</name>
        <dbReference type="ChEBI" id="CHEBI:60240"/>
    </ligand>
</feature>
<gene>
    <name evidence="1" type="primary">rnhC</name>
    <name type="ordered locus">MGAS9429_Spy1569</name>
</gene>
<sequence length="300" mass="32645">MNTLVLKIDAILSKHLKKQLASYTISSQNTYVAFAAKKNGVTVLLYKSGKLVLQGNGANALAQELNLPVAKTVFEASNNSQDIPIIGSDEVGNGSYFGGIAVVASFVDPKDHSFLKKLGVDDSKKLSDKTIQQIAPLLEKQIPHQSLLLSPKKYNELVGKSKPYNAISIKVALHNQAIFLLLQKGIQPKQIVIDAFTSQSNYEKHLKKEKNHFPNPLTFQEKAESHYLAVAVSSIIARNLFLDNLDQLGQDLGYQLPSGAGSASDKVASQLLAAYGMSSLEYSAKLHFANTHKAQALLTK</sequence>
<dbReference type="EC" id="3.1.26.4" evidence="1"/>
<dbReference type="EMBL" id="CP000259">
    <property type="protein sequence ID" value="ABF32756.1"/>
    <property type="molecule type" value="Genomic_DNA"/>
</dbReference>
<dbReference type="RefSeq" id="WP_002988245.1">
    <property type="nucleotide sequence ID" value="NC_008021.1"/>
</dbReference>
<dbReference type="SMR" id="Q1JK67"/>
<dbReference type="KEGG" id="spk:MGAS9429_Spy1569"/>
<dbReference type="HOGENOM" id="CLU_059546_1_0_9"/>
<dbReference type="Proteomes" id="UP000002433">
    <property type="component" value="Chromosome"/>
</dbReference>
<dbReference type="GO" id="GO:0005737">
    <property type="term" value="C:cytoplasm"/>
    <property type="evidence" value="ECO:0007669"/>
    <property type="project" value="UniProtKB-SubCell"/>
</dbReference>
<dbReference type="GO" id="GO:0032299">
    <property type="term" value="C:ribonuclease H2 complex"/>
    <property type="evidence" value="ECO:0007669"/>
    <property type="project" value="TreeGrafter"/>
</dbReference>
<dbReference type="GO" id="GO:0000287">
    <property type="term" value="F:magnesium ion binding"/>
    <property type="evidence" value="ECO:0007669"/>
    <property type="project" value="UniProtKB-UniRule"/>
</dbReference>
<dbReference type="GO" id="GO:0003723">
    <property type="term" value="F:RNA binding"/>
    <property type="evidence" value="ECO:0007669"/>
    <property type="project" value="InterPro"/>
</dbReference>
<dbReference type="GO" id="GO:0004523">
    <property type="term" value="F:RNA-DNA hybrid ribonuclease activity"/>
    <property type="evidence" value="ECO:0007669"/>
    <property type="project" value="UniProtKB-UniRule"/>
</dbReference>
<dbReference type="GO" id="GO:0043137">
    <property type="term" value="P:DNA replication, removal of RNA primer"/>
    <property type="evidence" value="ECO:0007669"/>
    <property type="project" value="TreeGrafter"/>
</dbReference>
<dbReference type="GO" id="GO:0006298">
    <property type="term" value="P:mismatch repair"/>
    <property type="evidence" value="ECO:0007669"/>
    <property type="project" value="TreeGrafter"/>
</dbReference>
<dbReference type="CDD" id="cd06590">
    <property type="entry name" value="RNase_HII_bacteria_HIII_like"/>
    <property type="match status" value="1"/>
</dbReference>
<dbReference type="CDD" id="cd14796">
    <property type="entry name" value="RNAse_HIII_N"/>
    <property type="match status" value="1"/>
</dbReference>
<dbReference type="FunFam" id="3.30.420.10:FF:000047">
    <property type="entry name" value="Ribonuclease HIII"/>
    <property type="match status" value="1"/>
</dbReference>
<dbReference type="Gene3D" id="3.30.420.10">
    <property type="entry name" value="Ribonuclease H-like superfamily/Ribonuclease H"/>
    <property type="match status" value="1"/>
</dbReference>
<dbReference type="Gene3D" id="3.30.310.10">
    <property type="entry name" value="TATA-Binding Protein"/>
    <property type="match status" value="1"/>
</dbReference>
<dbReference type="HAMAP" id="MF_00053">
    <property type="entry name" value="RNase_HIII"/>
    <property type="match status" value="1"/>
</dbReference>
<dbReference type="InterPro" id="IPR001352">
    <property type="entry name" value="RNase_HII/HIII"/>
</dbReference>
<dbReference type="InterPro" id="IPR024567">
    <property type="entry name" value="RNase_HII/HIII_dom"/>
</dbReference>
<dbReference type="InterPro" id="IPR004641">
    <property type="entry name" value="RNase_HIII"/>
</dbReference>
<dbReference type="InterPro" id="IPR024568">
    <property type="entry name" value="RNase_HIII_N"/>
</dbReference>
<dbReference type="InterPro" id="IPR012337">
    <property type="entry name" value="RNaseH-like_sf"/>
</dbReference>
<dbReference type="InterPro" id="IPR036397">
    <property type="entry name" value="RNaseH_sf"/>
</dbReference>
<dbReference type="InterPro" id="IPR012295">
    <property type="entry name" value="TBP_dom_sf"/>
</dbReference>
<dbReference type="NCBIfam" id="TIGR00716">
    <property type="entry name" value="rnhC"/>
    <property type="match status" value="1"/>
</dbReference>
<dbReference type="PANTHER" id="PTHR10954:SF23">
    <property type="entry name" value="RIBONUCLEASE"/>
    <property type="match status" value="1"/>
</dbReference>
<dbReference type="PANTHER" id="PTHR10954">
    <property type="entry name" value="RIBONUCLEASE H2 SUBUNIT A"/>
    <property type="match status" value="1"/>
</dbReference>
<dbReference type="Pfam" id="PF11858">
    <property type="entry name" value="DUF3378"/>
    <property type="match status" value="1"/>
</dbReference>
<dbReference type="Pfam" id="PF01351">
    <property type="entry name" value="RNase_HII"/>
    <property type="match status" value="1"/>
</dbReference>
<dbReference type="PIRSF" id="PIRSF037748">
    <property type="entry name" value="RnhC"/>
    <property type="match status" value="1"/>
</dbReference>
<dbReference type="SUPFAM" id="SSF53098">
    <property type="entry name" value="Ribonuclease H-like"/>
    <property type="match status" value="1"/>
</dbReference>
<dbReference type="PROSITE" id="PS51975">
    <property type="entry name" value="RNASE_H_2"/>
    <property type="match status" value="1"/>
</dbReference>
<reference key="1">
    <citation type="journal article" date="2006" name="Proc. Natl. Acad. Sci. U.S.A.">
        <title>Molecular genetic anatomy of inter- and intraserotype variation in the human bacterial pathogen group A Streptococcus.</title>
        <authorList>
            <person name="Beres S.B."/>
            <person name="Richter E.W."/>
            <person name="Nagiec M.J."/>
            <person name="Sumby P."/>
            <person name="Porcella S.F."/>
            <person name="DeLeo F.R."/>
            <person name="Musser J.M."/>
        </authorList>
    </citation>
    <scope>NUCLEOTIDE SEQUENCE [LARGE SCALE GENOMIC DNA]</scope>
    <source>
        <strain>MGAS9429</strain>
    </source>
</reference>
<evidence type="ECO:0000255" key="1">
    <source>
        <dbReference type="HAMAP-Rule" id="MF_00053"/>
    </source>
</evidence>
<evidence type="ECO:0000255" key="2">
    <source>
        <dbReference type="PROSITE-ProRule" id="PRU01319"/>
    </source>
</evidence>
<keyword id="KW-0963">Cytoplasm</keyword>
<keyword id="KW-0255">Endonuclease</keyword>
<keyword id="KW-0378">Hydrolase</keyword>
<keyword id="KW-0460">Magnesium</keyword>
<keyword id="KW-0479">Metal-binding</keyword>
<keyword id="KW-0540">Nuclease</keyword>
<protein>
    <recommendedName>
        <fullName evidence="1">Ribonuclease HIII</fullName>
        <shortName evidence="1">RNase HIII</shortName>
        <ecNumber evidence="1">3.1.26.4</ecNumber>
    </recommendedName>
</protein>
<proteinExistence type="inferred from homology"/>